<proteinExistence type="inferred from homology"/>
<accession>B2FP01</accession>
<organism>
    <name type="scientific">Stenotrophomonas maltophilia (strain K279a)</name>
    <dbReference type="NCBI Taxonomy" id="522373"/>
    <lineage>
        <taxon>Bacteria</taxon>
        <taxon>Pseudomonadati</taxon>
        <taxon>Pseudomonadota</taxon>
        <taxon>Gammaproteobacteria</taxon>
        <taxon>Lysobacterales</taxon>
        <taxon>Lysobacteraceae</taxon>
        <taxon>Stenotrophomonas</taxon>
        <taxon>Stenotrophomonas maltophilia group</taxon>
    </lineage>
</organism>
<name>AROC_STRMK</name>
<feature type="chain" id="PRO_1000115403" description="Chorismate synthase">
    <location>
        <begin position="1"/>
        <end position="367"/>
    </location>
</feature>
<feature type="binding site" evidence="1">
    <location>
        <position position="48"/>
    </location>
    <ligand>
        <name>NADP(+)</name>
        <dbReference type="ChEBI" id="CHEBI:58349"/>
    </ligand>
</feature>
<feature type="binding site" evidence="1">
    <location>
        <position position="54"/>
    </location>
    <ligand>
        <name>NADP(+)</name>
        <dbReference type="ChEBI" id="CHEBI:58349"/>
    </ligand>
</feature>
<feature type="binding site" evidence="1">
    <location>
        <begin position="125"/>
        <end position="127"/>
    </location>
    <ligand>
        <name>FMN</name>
        <dbReference type="ChEBI" id="CHEBI:58210"/>
    </ligand>
</feature>
<feature type="binding site" evidence="1">
    <location>
        <begin position="238"/>
        <end position="239"/>
    </location>
    <ligand>
        <name>FMN</name>
        <dbReference type="ChEBI" id="CHEBI:58210"/>
    </ligand>
</feature>
<feature type="binding site" evidence="1">
    <location>
        <position position="278"/>
    </location>
    <ligand>
        <name>FMN</name>
        <dbReference type="ChEBI" id="CHEBI:58210"/>
    </ligand>
</feature>
<feature type="binding site" evidence="1">
    <location>
        <begin position="293"/>
        <end position="297"/>
    </location>
    <ligand>
        <name>FMN</name>
        <dbReference type="ChEBI" id="CHEBI:58210"/>
    </ligand>
</feature>
<feature type="binding site" evidence="1">
    <location>
        <position position="319"/>
    </location>
    <ligand>
        <name>FMN</name>
        <dbReference type="ChEBI" id="CHEBI:58210"/>
    </ligand>
</feature>
<reference key="1">
    <citation type="journal article" date="2008" name="Genome Biol.">
        <title>The complete genome, comparative and functional analysis of Stenotrophomonas maltophilia reveals an organism heavily shielded by drug resistance determinants.</title>
        <authorList>
            <person name="Crossman L.C."/>
            <person name="Gould V.C."/>
            <person name="Dow J.M."/>
            <person name="Vernikos G.S."/>
            <person name="Okazaki A."/>
            <person name="Sebaihia M."/>
            <person name="Saunders D."/>
            <person name="Arrowsmith C."/>
            <person name="Carver T."/>
            <person name="Peters N."/>
            <person name="Adlem E."/>
            <person name="Kerhornou A."/>
            <person name="Lord A."/>
            <person name="Murphy L."/>
            <person name="Seeger K."/>
            <person name="Squares R."/>
            <person name="Rutter S."/>
            <person name="Quail M.A."/>
            <person name="Rajandream M.A."/>
            <person name="Harris D."/>
            <person name="Churcher C."/>
            <person name="Bentley S.D."/>
            <person name="Parkhill J."/>
            <person name="Thomson N.R."/>
            <person name="Avison M.B."/>
        </authorList>
    </citation>
    <scope>NUCLEOTIDE SEQUENCE [LARGE SCALE GENOMIC DNA]</scope>
    <source>
        <strain>K279a</strain>
    </source>
</reference>
<keyword id="KW-0028">Amino-acid biosynthesis</keyword>
<keyword id="KW-0057">Aromatic amino acid biosynthesis</keyword>
<keyword id="KW-0274">FAD</keyword>
<keyword id="KW-0285">Flavoprotein</keyword>
<keyword id="KW-0288">FMN</keyword>
<keyword id="KW-0456">Lyase</keyword>
<keyword id="KW-0521">NADP</keyword>
<keyword id="KW-1185">Reference proteome</keyword>
<dbReference type="EC" id="4.2.3.5" evidence="1"/>
<dbReference type="EMBL" id="AM743169">
    <property type="protein sequence ID" value="CAQ46855.1"/>
    <property type="molecule type" value="Genomic_DNA"/>
</dbReference>
<dbReference type="RefSeq" id="WP_012480895.1">
    <property type="nucleotide sequence ID" value="NC_010943.1"/>
</dbReference>
<dbReference type="SMR" id="B2FP01"/>
<dbReference type="EnsemblBacteria" id="CAQ46855">
    <property type="protein sequence ID" value="CAQ46855"/>
    <property type="gene ID" value="Smlt3429"/>
</dbReference>
<dbReference type="KEGG" id="sml:Smlt3429"/>
<dbReference type="PATRIC" id="fig|522373.3.peg.3215"/>
<dbReference type="eggNOG" id="COG0082">
    <property type="taxonomic scope" value="Bacteria"/>
</dbReference>
<dbReference type="HOGENOM" id="CLU_034547_0_2_6"/>
<dbReference type="UniPathway" id="UPA00053">
    <property type="reaction ID" value="UER00090"/>
</dbReference>
<dbReference type="Proteomes" id="UP000008840">
    <property type="component" value="Chromosome"/>
</dbReference>
<dbReference type="GO" id="GO:0005829">
    <property type="term" value="C:cytosol"/>
    <property type="evidence" value="ECO:0007669"/>
    <property type="project" value="TreeGrafter"/>
</dbReference>
<dbReference type="GO" id="GO:0004107">
    <property type="term" value="F:chorismate synthase activity"/>
    <property type="evidence" value="ECO:0007669"/>
    <property type="project" value="UniProtKB-UniRule"/>
</dbReference>
<dbReference type="GO" id="GO:0010181">
    <property type="term" value="F:FMN binding"/>
    <property type="evidence" value="ECO:0007669"/>
    <property type="project" value="TreeGrafter"/>
</dbReference>
<dbReference type="GO" id="GO:0008652">
    <property type="term" value="P:amino acid biosynthetic process"/>
    <property type="evidence" value="ECO:0007669"/>
    <property type="project" value="UniProtKB-KW"/>
</dbReference>
<dbReference type="GO" id="GO:0009073">
    <property type="term" value="P:aromatic amino acid family biosynthetic process"/>
    <property type="evidence" value="ECO:0007669"/>
    <property type="project" value="UniProtKB-KW"/>
</dbReference>
<dbReference type="GO" id="GO:0009423">
    <property type="term" value="P:chorismate biosynthetic process"/>
    <property type="evidence" value="ECO:0007669"/>
    <property type="project" value="UniProtKB-UniRule"/>
</dbReference>
<dbReference type="CDD" id="cd07304">
    <property type="entry name" value="Chorismate_synthase"/>
    <property type="match status" value="1"/>
</dbReference>
<dbReference type="FunFam" id="3.60.150.10:FF:000001">
    <property type="entry name" value="Chorismate synthase"/>
    <property type="match status" value="1"/>
</dbReference>
<dbReference type="Gene3D" id="3.60.150.10">
    <property type="entry name" value="Chorismate synthase AroC"/>
    <property type="match status" value="1"/>
</dbReference>
<dbReference type="HAMAP" id="MF_00300">
    <property type="entry name" value="Chorismate_synth"/>
    <property type="match status" value="1"/>
</dbReference>
<dbReference type="InterPro" id="IPR000453">
    <property type="entry name" value="Chorismate_synth"/>
</dbReference>
<dbReference type="InterPro" id="IPR035904">
    <property type="entry name" value="Chorismate_synth_AroC_sf"/>
</dbReference>
<dbReference type="InterPro" id="IPR020541">
    <property type="entry name" value="Chorismate_synthase_CS"/>
</dbReference>
<dbReference type="NCBIfam" id="TIGR00033">
    <property type="entry name" value="aroC"/>
    <property type="match status" value="1"/>
</dbReference>
<dbReference type="NCBIfam" id="NF003793">
    <property type="entry name" value="PRK05382.1"/>
    <property type="match status" value="1"/>
</dbReference>
<dbReference type="PANTHER" id="PTHR21085">
    <property type="entry name" value="CHORISMATE SYNTHASE"/>
    <property type="match status" value="1"/>
</dbReference>
<dbReference type="PANTHER" id="PTHR21085:SF0">
    <property type="entry name" value="CHORISMATE SYNTHASE"/>
    <property type="match status" value="1"/>
</dbReference>
<dbReference type="Pfam" id="PF01264">
    <property type="entry name" value="Chorismate_synt"/>
    <property type="match status" value="1"/>
</dbReference>
<dbReference type="PIRSF" id="PIRSF001456">
    <property type="entry name" value="Chorismate_synth"/>
    <property type="match status" value="1"/>
</dbReference>
<dbReference type="SUPFAM" id="SSF103263">
    <property type="entry name" value="Chorismate synthase, AroC"/>
    <property type="match status" value="1"/>
</dbReference>
<dbReference type="PROSITE" id="PS00787">
    <property type="entry name" value="CHORISMATE_SYNTHASE_1"/>
    <property type="match status" value="1"/>
</dbReference>
<dbReference type="PROSITE" id="PS00788">
    <property type="entry name" value="CHORISMATE_SYNTHASE_2"/>
    <property type="match status" value="1"/>
</dbReference>
<dbReference type="PROSITE" id="PS00789">
    <property type="entry name" value="CHORISMATE_SYNTHASE_3"/>
    <property type="match status" value="1"/>
</dbReference>
<evidence type="ECO:0000255" key="1">
    <source>
        <dbReference type="HAMAP-Rule" id="MF_00300"/>
    </source>
</evidence>
<gene>
    <name evidence="1" type="primary">aroC</name>
    <name type="ordered locus">Smlt3429</name>
</gene>
<sequence>MSSNSFGKLFTVTTFGESHGPAIGCVIDGCPPGLALDAAEFGHDLQRRATGKSRHTSARREADEVEILSGVYEGLTTGTPIALLIRNTDQRSKDYANIGQQFRPGHADYSYWHKYGIRDPRGGGRSSARETTMRVAAGVVAKKWLAERFGVTVRGYLSQLGDITPAGFDWSAVEDNPFFWPHAAQVPELEAYMDALRKSGDSVGARVDVVADNVPPGWGEPIYGKLDGELAAALMSINAVKGVEIGDGFASAAQKGTEHRDLLTPQGFASNHAGGILGGISTGQPVVASMVLKPTSSLRLPGPSLDTAGNVVEVVTTGRHDPCVGIRATPIAEAMVAMVLMDQALRHRAQCGDVGTITPRIPGQIDG</sequence>
<comment type="function">
    <text evidence="1">Catalyzes the anti-1,4-elimination of the C-3 phosphate and the C-6 proR hydrogen from 5-enolpyruvylshikimate-3-phosphate (EPSP) to yield chorismate, which is the branch point compound that serves as the starting substrate for the three terminal pathways of aromatic amino acid biosynthesis. This reaction introduces a second double bond into the aromatic ring system.</text>
</comment>
<comment type="catalytic activity">
    <reaction evidence="1">
        <text>5-O-(1-carboxyvinyl)-3-phosphoshikimate = chorismate + phosphate</text>
        <dbReference type="Rhea" id="RHEA:21020"/>
        <dbReference type="ChEBI" id="CHEBI:29748"/>
        <dbReference type="ChEBI" id="CHEBI:43474"/>
        <dbReference type="ChEBI" id="CHEBI:57701"/>
        <dbReference type="EC" id="4.2.3.5"/>
    </reaction>
</comment>
<comment type="cofactor">
    <cofactor evidence="1">
        <name>FMNH2</name>
        <dbReference type="ChEBI" id="CHEBI:57618"/>
    </cofactor>
    <text evidence="1">Reduced FMN (FMNH(2)).</text>
</comment>
<comment type="pathway">
    <text evidence="1">Metabolic intermediate biosynthesis; chorismate biosynthesis; chorismate from D-erythrose 4-phosphate and phosphoenolpyruvate: step 7/7.</text>
</comment>
<comment type="subunit">
    <text evidence="1">Homotetramer.</text>
</comment>
<comment type="similarity">
    <text evidence="1">Belongs to the chorismate synthase family.</text>
</comment>
<protein>
    <recommendedName>
        <fullName evidence="1">Chorismate synthase</fullName>
        <shortName evidence="1">CS</shortName>
        <ecNumber evidence="1">4.2.3.5</ecNumber>
    </recommendedName>
    <alternativeName>
        <fullName evidence="1">5-enolpyruvylshikimate-3-phosphate phospholyase</fullName>
    </alternativeName>
</protein>